<evidence type="ECO:0000250" key="1"/>
<evidence type="ECO:0000255" key="2"/>
<evidence type="ECO:0000305" key="3"/>
<evidence type="ECO:0007829" key="4">
    <source>
        <dbReference type="PDB" id="2I4S"/>
    </source>
</evidence>
<evidence type="ECO:0007829" key="5">
    <source>
        <dbReference type="PDB" id="2I6V"/>
    </source>
</evidence>
<sequence>MEFKQLPPLAAWPRLLSQNTLRWQKPISEGLTLLLLVASAWTLGKMVWVVSAEQTPVPTWSPTLSGLKAERQPLDISVLQKGELFGVFTEPKEAPVVEQPVVVDAPKTRLSLVLSGVVASNDAQKSLAVIANRGVQATYGINEVIEGTQAKLKAVMPDRVIISNSGRDETLMLEGLDYTAPATASVSNPPRPRPNQPNAVPQFEDKVDAIREAIARNPQEIFQYVRLSQVKRDDKVLGYRVSPGKDPVLFESIGLQDGDMAVALNGLDLTDPNVMNTLFQSMNEMTEMSLTVERDGQQHDVYIQF</sequence>
<comment type="function">
    <text evidence="1">Involved in a type II secretion system (T2SS, formerly general secretion pathway, GSP) for the export of proteins (By similarity). Required for secretion of cholera toxin through the outer membrane.</text>
</comment>
<comment type="subcellular location">
    <subcellularLocation>
        <location evidence="3">Cell inner membrane</location>
        <topology evidence="3">Single-pass membrane protein</topology>
    </subcellularLocation>
</comment>
<comment type="similarity">
    <text evidence="3">Belongs to the GSP C family.</text>
</comment>
<accession>P45777</accession>
<accession>Q9KNK4</accession>
<proteinExistence type="evidence at protein level"/>
<reference key="1">
    <citation type="thesis" date="1994" institute="Michigan State University" country="United States">
        <title>Organization of the general secretion pathway genes in Vibrio cholerae.</title>
        <authorList>
            <person name="Overbye L.J."/>
        </authorList>
    </citation>
    <scope>NUCLEOTIDE SEQUENCE [GENOMIC DNA]</scope>
    <source>
        <strain>El Tor TRH7000</strain>
    </source>
</reference>
<reference key="2">
    <citation type="journal article" date="2000" name="Nature">
        <title>DNA sequence of both chromosomes of the cholera pathogen Vibrio cholerae.</title>
        <authorList>
            <person name="Heidelberg J.F."/>
            <person name="Eisen J.A."/>
            <person name="Nelson W.C."/>
            <person name="Clayton R.A."/>
            <person name="Gwinn M.L."/>
            <person name="Dodson R.J."/>
            <person name="Haft D.H."/>
            <person name="Hickey E.K."/>
            <person name="Peterson J.D."/>
            <person name="Umayam L.A."/>
            <person name="Gill S.R."/>
            <person name="Nelson K.E."/>
            <person name="Read T.D."/>
            <person name="Tettelin H."/>
            <person name="Richardson D.L."/>
            <person name="Ermolaeva M.D."/>
            <person name="Vamathevan J.J."/>
            <person name="Bass S."/>
            <person name="Qin H."/>
            <person name="Dragoi I."/>
            <person name="Sellers P."/>
            <person name="McDonald L.A."/>
            <person name="Utterback T.R."/>
            <person name="Fleischmann R.D."/>
            <person name="Nierman W.C."/>
            <person name="White O."/>
            <person name="Salzberg S.L."/>
            <person name="Smith H.O."/>
            <person name="Colwell R.R."/>
            <person name="Mekalanos J.J."/>
            <person name="Venter J.C."/>
            <person name="Fraser C.M."/>
        </authorList>
    </citation>
    <scope>NUCLEOTIDE SEQUENCE [LARGE SCALE GENOMIC DNA]</scope>
    <source>
        <strain>ATCC 39315 / El Tor Inaba N16961</strain>
    </source>
</reference>
<name>GSPC_VIBCH</name>
<gene>
    <name type="primary">epsC</name>
    <name type="ordered locus">VC_2734</name>
</gene>
<keyword id="KW-0002">3D-structure</keyword>
<keyword id="KW-0997">Cell inner membrane</keyword>
<keyword id="KW-1003">Cell membrane</keyword>
<keyword id="KW-0472">Membrane</keyword>
<keyword id="KW-0653">Protein transport</keyword>
<keyword id="KW-1185">Reference proteome</keyword>
<keyword id="KW-0812">Transmembrane</keyword>
<keyword id="KW-1133">Transmembrane helix</keyword>
<keyword id="KW-0813">Transport</keyword>
<organism>
    <name type="scientific">Vibrio cholerae serotype O1 (strain ATCC 39315 / El Tor Inaba N16961)</name>
    <dbReference type="NCBI Taxonomy" id="243277"/>
    <lineage>
        <taxon>Bacteria</taxon>
        <taxon>Pseudomonadati</taxon>
        <taxon>Pseudomonadota</taxon>
        <taxon>Gammaproteobacteria</taxon>
        <taxon>Vibrionales</taxon>
        <taxon>Vibrionaceae</taxon>
        <taxon>Vibrio</taxon>
    </lineage>
</organism>
<dbReference type="EMBL" id="L33796">
    <property type="protein sequence ID" value="AAA58784.1"/>
    <property type="molecule type" value="Genomic_DNA"/>
</dbReference>
<dbReference type="EMBL" id="AE003852">
    <property type="protein sequence ID" value="AAF95873.1"/>
    <property type="molecule type" value="Genomic_DNA"/>
</dbReference>
<dbReference type="PIR" id="G82041">
    <property type="entry name" value="G82041"/>
</dbReference>
<dbReference type="RefSeq" id="NP_232360.1">
    <property type="nucleotide sequence ID" value="NC_002505.1"/>
</dbReference>
<dbReference type="PDB" id="2I4S">
    <property type="method" value="X-ray"/>
    <property type="resolution" value="1.92 A"/>
    <property type="chains" value="A/B=204-305"/>
</dbReference>
<dbReference type="PDB" id="2I6V">
    <property type="method" value="X-ray"/>
    <property type="resolution" value="1.63 A"/>
    <property type="chains" value="A=219-305"/>
</dbReference>
<dbReference type="PDBsum" id="2I4S"/>
<dbReference type="PDBsum" id="2I6V"/>
<dbReference type="SMR" id="P45777"/>
<dbReference type="STRING" id="243277.VC_2734"/>
<dbReference type="DNASU" id="2614897"/>
<dbReference type="EnsemblBacteria" id="AAF95873">
    <property type="protein sequence ID" value="AAF95873"/>
    <property type="gene ID" value="VC_2734"/>
</dbReference>
<dbReference type="KEGG" id="vch:VC_2734"/>
<dbReference type="PATRIC" id="fig|243277.26.peg.2610"/>
<dbReference type="eggNOG" id="COG3031">
    <property type="taxonomic scope" value="Bacteria"/>
</dbReference>
<dbReference type="HOGENOM" id="CLU_068012_0_0_6"/>
<dbReference type="EvolutionaryTrace" id="P45777"/>
<dbReference type="Proteomes" id="UP000000584">
    <property type="component" value="Chromosome 1"/>
</dbReference>
<dbReference type="GO" id="GO:0005886">
    <property type="term" value="C:plasma membrane"/>
    <property type="evidence" value="ECO:0007669"/>
    <property type="project" value="UniProtKB-SubCell"/>
</dbReference>
<dbReference type="GO" id="GO:0015627">
    <property type="term" value="C:type II protein secretion system complex"/>
    <property type="evidence" value="ECO:0007669"/>
    <property type="project" value="InterPro"/>
</dbReference>
<dbReference type="GO" id="GO:0015628">
    <property type="term" value="P:protein secretion by the type II secretion system"/>
    <property type="evidence" value="ECO:0007669"/>
    <property type="project" value="InterPro"/>
</dbReference>
<dbReference type="FunFam" id="2.30.42.10:FF:000276">
    <property type="entry name" value="General secretion pathway protein C"/>
    <property type="match status" value="1"/>
</dbReference>
<dbReference type="Gene3D" id="2.30.30.830">
    <property type="match status" value="1"/>
</dbReference>
<dbReference type="Gene3D" id="2.30.42.10">
    <property type="match status" value="1"/>
</dbReference>
<dbReference type="InterPro" id="IPR036034">
    <property type="entry name" value="PDZ_sf"/>
</dbReference>
<dbReference type="InterPro" id="IPR024961">
    <property type="entry name" value="T2SS_GspC_N"/>
</dbReference>
<dbReference type="InterPro" id="IPR001639">
    <property type="entry name" value="T2SS_protein-GspC"/>
</dbReference>
<dbReference type="NCBIfam" id="TIGR01713">
    <property type="entry name" value="typeII_sec_gspC"/>
    <property type="match status" value="1"/>
</dbReference>
<dbReference type="Pfam" id="PF11356">
    <property type="entry name" value="T2SSC"/>
    <property type="match status" value="1"/>
</dbReference>
<dbReference type="PRINTS" id="PR00810">
    <property type="entry name" value="BCTERIALGSPC"/>
</dbReference>
<dbReference type="SUPFAM" id="SSF50156">
    <property type="entry name" value="PDZ domain-like"/>
    <property type="match status" value="1"/>
</dbReference>
<dbReference type="PROSITE" id="PS01141">
    <property type="entry name" value="T2SP_C"/>
    <property type="match status" value="1"/>
</dbReference>
<protein>
    <recommendedName>
        <fullName>Type II secretion system protein C</fullName>
        <shortName>T2SS protein C</shortName>
    </recommendedName>
    <alternativeName>
        <fullName>Cholera toxin secretion protein EpsC</fullName>
    </alternativeName>
    <alternativeName>
        <fullName>General secretion pathway protein C</fullName>
    </alternativeName>
</protein>
<feature type="chain" id="PRO_0000215005" description="Type II secretion system protein C">
    <location>
        <begin position="1"/>
        <end position="305"/>
    </location>
</feature>
<feature type="topological domain" description="Cytoplasmic" evidence="2">
    <location>
        <begin position="1"/>
        <end position="29"/>
    </location>
</feature>
<feature type="transmembrane region" description="Helical" evidence="2">
    <location>
        <begin position="30"/>
        <end position="50"/>
    </location>
</feature>
<feature type="topological domain" description="Periplasmic" evidence="2">
    <location>
        <begin position="51"/>
        <end position="305"/>
    </location>
</feature>
<feature type="sequence conflict" description="In Ref. 1; AAA58784." evidence="3" ref="1">
    <original>G</original>
    <variation>A</variation>
    <location>
        <position position="44"/>
    </location>
</feature>
<feature type="helix" evidence="4">
    <location>
        <begin position="204"/>
        <end position="216"/>
    </location>
</feature>
<feature type="helix" evidence="4">
    <location>
        <begin position="218"/>
        <end position="220"/>
    </location>
</feature>
<feature type="helix" evidence="5">
    <location>
        <begin position="221"/>
        <end position="223"/>
    </location>
</feature>
<feature type="strand" evidence="5">
    <location>
        <begin position="225"/>
        <end position="232"/>
    </location>
</feature>
<feature type="strand" evidence="5">
    <location>
        <begin position="235"/>
        <end position="243"/>
    </location>
</feature>
<feature type="helix" evidence="5">
    <location>
        <begin position="247"/>
        <end position="252"/>
    </location>
</feature>
<feature type="strand" evidence="5">
    <location>
        <begin position="260"/>
        <end position="264"/>
    </location>
</feature>
<feature type="helix" evidence="5">
    <location>
        <begin position="272"/>
        <end position="280"/>
    </location>
</feature>
<feature type="helix" evidence="5">
    <location>
        <begin position="281"/>
        <end position="284"/>
    </location>
</feature>
<feature type="strand" evidence="5">
    <location>
        <begin position="286"/>
        <end position="294"/>
    </location>
</feature>
<feature type="strand" evidence="5">
    <location>
        <begin position="297"/>
        <end position="304"/>
    </location>
</feature>